<reference key="1">
    <citation type="journal article" date="1999" name="Mol. Biol. Cell">
        <title>Luminal heterodimeric amino acid transporter defective in cystinuria.</title>
        <authorList>
            <person name="Pfeiffer R."/>
            <person name="Loffing J."/>
            <person name="Rossier G."/>
            <person name="Bauch C."/>
            <person name="Meier C."/>
            <person name="Eggermann T."/>
            <person name="Loffing-Cueni D."/>
            <person name="Kuehn L.C."/>
            <person name="Verrey F."/>
        </authorList>
    </citation>
    <scope>NUCLEOTIDE SEQUENCE [MRNA]</scope>
    <scope>FUNCTION</scope>
    <source>
        <strain>C57BL/6J</strain>
        <strain>FVB/N</strain>
    </source>
</reference>
<reference key="2">
    <citation type="journal article" date="2000" name="J. Biol. Chem.">
        <title>Differential influence of the 4F2 heavy chain and the protein related to b(0,+) amino acid transport on substrate affinity of the heteromeric b(0,+) amino acid transporter.</title>
        <authorList>
            <person name="Rajan D.P."/>
            <person name="Huang W."/>
            <person name="Kekuda R."/>
            <person name="George R.L."/>
            <person name="Wang J."/>
            <person name="Conway S.J."/>
            <person name="Devoe L.D."/>
            <person name="Leibach F.H."/>
            <person name="Prasad P.D."/>
            <person name="Ganapathy V."/>
        </authorList>
    </citation>
    <scope>NUCLEOTIDE SEQUENCE [MRNA]</scope>
</reference>
<reference key="3">
    <citation type="journal article" date="2004" name="Genome Res.">
        <title>The status, quality, and expansion of the NIH full-length cDNA project: the Mammalian Gene Collection (MGC).</title>
        <authorList>
            <consortium name="The MGC Project Team"/>
        </authorList>
    </citation>
    <scope>NUCLEOTIDE SEQUENCE [LARGE SCALE MRNA]</scope>
    <source>
        <strain>FVB/N</strain>
        <tissue>Kidney</tissue>
    </source>
</reference>
<reference key="4">
    <citation type="journal article" date="2002" name="Am. J. Physiol.">
        <title>rBAT-b(0,+)AT heterodimer is the main apical reabsorption system for cystine in the kidney.</title>
        <authorList>
            <person name="Fernandez E."/>
            <person name="Carrascal M."/>
            <person name="Rousaud F."/>
            <person name="Abian J."/>
            <person name="Zorzano A."/>
            <person name="Palacin M."/>
            <person name="Chillaron J."/>
        </authorList>
    </citation>
    <scope>SUBUNIT</scope>
    <scope>SUBCELLULAR LOCATION</scope>
    <scope>TISSUE SPECIFICITY</scope>
</reference>
<reference key="5">
    <citation type="journal article" date="2010" name="Cell">
        <title>A tissue-specific atlas of mouse protein phosphorylation and expression.</title>
        <authorList>
            <person name="Huttlin E.L."/>
            <person name="Jedrychowski M.P."/>
            <person name="Elias J.E."/>
            <person name="Goswami T."/>
            <person name="Rad R."/>
            <person name="Beausoleil S.A."/>
            <person name="Villen J."/>
            <person name="Haas W."/>
            <person name="Sowa M.E."/>
            <person name="Gygi S.P."/>
        </authorList>
    </citation>
    <scope>IDENTIFICATION BY MASS SPECTROMETRY [LARGE SCALE ANALYSIS]</scope>
    <source>
        <tissue>Kidney</tissue>
    </source>
</reference>
<gene>
    <name type="primary">Slc7a9</name>
    <name type="synonym">Bat1</name>
</gene>
<protein>
    <recommendedName>
        <fullName>b(0,+)-type amino acid transporter 1</fullName>
        <shortName>b(0,+)AT1</shortName>
    </recommendedName>
    <alternativeName>
        <fullName>Glycoprotein-associated amino acid transporter b0,+AT1</fullName>
    </alternativeName>
    <alternativeName>
        <fullName>Solute carrier family 7 member 9</fullName>
    </alternativeName>
</protein>
<accession>Q9QXA6</accession>
<sequence>MEETSLRRRREDEKSTHSTELKTTSLQKEVGLLSGICIIVGTIIGSGIFISPKSVLANTESVGPCLIIWAACGILATLGALCFAELGTMITKSGGEYPYLMEAFGPIPAYLFSWTSLIVMKPSSFAIICLSFSEYVCAAFYSGCKPPAVVVKLLAAAAILFITTVNALSVRLGSYVQNVFTAAKMVIVAIIIISGLVFLAQGNVKNFQNSFEGTQTSVGAISLAFYNGLWAYDGWNQLNYITEELRNPYRNLPMAIVIGIPLVTVCYILMNIAYFTVMTPTELLQSQAVAVTFGDRVLYPASWVVPLFVAFSTIGAANGTCFTAGRLIYVAGREGHMLKVLSYISVKRLTPAPALIFYGIIAIIYIIPGDINSLVNYFSFAAWLFYGMTILGLVVMRFTRKDLERPIKVPLFIPIIVILVSLFLILAPIISEPAWEYLYCVLFILSGLIFYFLFVYYKFGWAQRISRPVTKHLQMLMEVVPPEKDPE</sequence>
<name>BAT1_MOUSE</name>
<organism>
    <name type="scientific">Mus musculus</name>
    <name type="common">Mouse</name>
    <dbReference type="NCBI Taxonomy" id="10090"/>
    <lineage>
        <taxon>Eukaryota</taxon>
        <taxon>Metazoa</taxon>
        <taxon>Chordata</taxon>
        <taxon>Craniata</taxon>
        <taxon>Vertebrata</taxon>
        <taxon>Euteleostomi</taxon>
        <taxon>Mammalia</taxon>
        <taxon>Eutheria</taxon>
        <taxon>Euarchontoglires</taxon>
        <taxon>Glires</taxon>
        <taxon>Rodentia</taxon>
        <taxon>Myomorpha</taxon>
        <taxon>Muroidea</taxon>
        <taxon>Muridae</taxon>
        <taxon>Murinae</taxon>
        <taxon>Mus</taxon>
        <taxon>Mus</taxon>
    </lineage>
</organism>
<proteinExistence type="evidence at protein level"/>
<dbReference type="EMBL" id="AJ249198">
    <property type="protein sequence ID" value="CAB54042.1"/>
    <property type="molecule type" value="mRNA"/>
</dbReference>
<dbReference type="EMBL" id="AF192310">
    <property type="protein sequence ID" value="AAG28396.1"/>
    <property type="molecule type" value="mRNA"/>
</dbReference>
<dbReference type="EMBL" id="BC010746">
    <property type="protein sequence ID" value="AAH10746.1"/>
    <property type="molecule type" value="mRNA"/>
</dbReference>
<dbReference type="CCDS" id="CCDS21150.1"/>
<dbReference type="RefSeq" id="NP_001185944.1">
    <property type="nucleotide sequence ID" value="NM_001199015.1"/>
</dbReference>
<dbReference type="RefSeq" id="NP_001185945.1">
    <property type="nucleotide sequence ID" value="NM_001199016.1"/>
</dbReference>
<dbReference type="RefSeq" id="NP_067266.1">
    <property type="nucleotide sequence ID" value="NM_021291.3"/>
</dbReference>
<dbReference type="RefSeq" id="XP_006540107.1">
    <property type="nucleotide sequence ID" value="XM_006540044.2"/>
</dbReference>
<dbReference type="RefSeq" id="XP_006540108.1">
    <property type="nucleotide sequence ID" value="XM_006540045.3"/>
</dbReference>
<dbReference type="RefSeq" id="XP_011248893.1">
    <property type="nucleotide sequence ID" value="XM_011250591.2"/>
</dbReference>
<dbReference type="RefSeq" id="XP_011248894.1">
    <property type="nucleotide sequence ID" value="XM_011250592.3"/>
</dbReference>
<dbReference type="SMR" id="Q9QXA6"/>
<dbReference type="FunCoup" id="Q9QXA6">
    <property type="interactions" value="173"/>
</dbReference>
<dbReference type="STRING" id="10090.ENSMUSP00000032703"/>
<dbReference type="PhosphoSitePlus" id="Q9QXA6"/>
<dbReference type="PaxDb" id="10090-ENSMUSP00000032703"/>
<dbReference type="ProteomicsDB" id="277112"/>
<dbReference type="Antibodypedia" id="28931">
    <property type="antibodies" value="85 antibodies from 20 providers"/>
</dbReference>
<dbReference type="DNASU" id="30962"/>
<dbReference type="Ensembl" id="ENSMUST00000032703.10">
    <property type="protein sequence ID" value="ENSMUSP00000032703.10"/>
    <property type="gene ID" value="ENSMUSG00000030492.17"/>
</dbReference>
<dbReference type="Ensembl" id="ENSMUST00000118383.8">
    <property type="protein sequence ID" value="ENSMUSP00000113181.2"/>
    <property type="gene ID" value="ENSMUSG00000030492.17"/>
</dbReference>
<dbReference type="Ensembl" id="ENSMUST00000118969.8">
    <property type="protein sequence ID" value="ENSMUSP00000112726.2"/>
    <property type="gene ID" value="ENSMUSG00000030492.17"/>
</dbReference>
<dbReference type="GeneID" id="30962"/>
<dbReference type="KEGG" id="mmu:30962"/>
<dbReference type="UCSC" id="uc009gjw.2">
    <property type="organism name" value="mouse"/>
</dbReference>
<dbReference type="AGR" id="MGI:1353656"/>
<dbReference type="CTD" id="11136"/>
<dbReference type="MGI" id="MGI:1353656">
    <property type="gene designation" value="Slc7a9"/>
</dbReference>
<dbReference type="VEuPathDB" id="HostDB:ENSMUSG00000030492"/>
<dbReference type="eggNOG" id="KOG1287">
    <property type="taxonomic scope" value="Eukaryota"/>
</dbReference>
<dbReference type="GeneTree" id="ENSGT00940000156370"/>
<dbReference type="HOGENOM" id="CLU_007946_3_0_1"/>
<dbReference type="InParanoid" id="Q9QXA6"/>
<dbReference type="OMA" id="TYWVISF"/>
<dbReference type="OrthoDB" id="5982228at2759"/>
<dbReference type="PhylomeDB" id="Q9QXA6"/>
<dbReference type="TreeFam" id="TF313355"/>
<dbReference type="Reactome" id="R-MMU-210991">
    <property type="pathway name" value="Basigin interactions"/>
</dbReference>
<dbReference type="Reactome" id="R-MMU-352230">
    <property type="pathway name" value="Amino acid transport across the plasma membrane"/>
</dbReference>
<dbReference type="BioGRID-ORCS" id="30962">
    <property type="hits" value="1 hit in 76 CRISPR screens"/>
</dbReference>
<dbReference type="ChiTaRS" id="Ddx39">
    <property type="organism name" value="mouse"/>
</dbReference>
<dbReference type="PRO" id="PR:Q9QXA6"/>
<dbReference type="Proteomes" id="UP000000589">
    <property type="component" value="Chromosome 7"/>
</dbReference>
<dbReference type="RNAct" id="Q9QXA6">
    <property type="molecule type" value="protein"/>
</dbReference>
<dbReference type="Bgee" id="ENSMUSG00000030492">
    <property type="expression patterns" value="Expressed in small intestine Peyer's patch and 83 other cell types or tissues"/>
</dbReference>
<dbReference type="ExpressionAtlas" id="Q9QXA6">
    <property type="expression patterns" value="baseline and differential"/>
</dbReference>
<dbReference type="GO" id="GO:0016324">
    <property type="term" value="C:apical plasma membrane"/>
    <property type="evidence" value="ECO:0000250"/>
    <property type="project" value="UniProtKB"/>
</dbReference>
<dbReference type="GO" id="GO:0031526">
    <property type="term" value="C:brush border membrane"/>
    <property type="evidence" value="ECO:0000314"/>
    <property type="project" value="UniProtKB"/>
</dbReference>
<dbReference type="GO" id="GO:0005886">
    <property type="term" value="C:plasma membrane"/>
    <property type="evidence" value="ECO:0000250"/>
    <property type="project" value="UniProtKB"/>
</dbReference>
<dbReference type="GO" id="GO:0180009">
    <property type="term" value="F:broad specificity neutral L-amino acid:basic L-amino acid antiporter activity"/>
    <property type="evidence" value="ECO:0000250"/>
    <property type="project" value="UniProtKB"/>
</dbReference>
<dbReference type="GO" id="GO:0015184">
    <property type="term" value="F:L-cystine transmembrane transporter activity"/>
    <property type="evidence" value="ECO:0000250"/>
    <property type="project" value="UniProtKB"/>
</dbReference>
<dbReference type="GO" id="GO:0015175">
    <property type="term" value="F:neutral L-amino acid transmembrane transporter activity"/>
    <property type="evidence" value="ECO:0000250"/>
    <property type="project" value="UniProtKB"/>
</dbReference>
<dbReference type="GO" id="GO:0042605">
    <property type="term" value="F:peptide antigen binding"/>
    <property type="evidence" value="ECO:0000250"/>
    <property type="project" value="UniProtKB"/>
</dbReference>
<dbReference type="GO" id="GO:0046982">
    <property type="term" value="F:protein heterodimerization activity"/>
    <property type="evidence" value="ECO:0007669"/>
    <property type="project" value="Ensembl"/>
</dbReference>
<dbReference type="GO" id="GO:0015811">
    <property type="term" value="P:L-cystine transport"/>
    <property type="evidence" value="ECO:0000250"/>
    <property type="project" value="UniProtKB"/>
</dbReference>
<dbReference type="GO" id="GO:0015804">
    <property type="term" value="P:neutral amino acid transport"/>
    <property type="evidence" value="ECO:0000250"/>
    <property type="project" value="UniProtKB"/>
</dbReference>
<dbReference type="FunFam" id="1.20.1740.10:FF:000015">
    <property type="entry name" value="B(0,+)-type amino acid transporter 1"/>
    <property type="match status" value="1"/>
</dbReference>
<dbReference type="Gene3D" id="1.20.1740.10">
    <property type="entry name" value="Amino acid/polyamine transporter I"/>
    <property type="match status" value="1"/>
</dbReference>
<dbReference type="InterPro" id="IPR002293">
    <property type="entry name" value="AA/rel_permease1"/>
</dbReference>
<dbReference type="InterPro" id="IPR050598">
    <property type="entry name" value="AminoAcid_Transporter"/>
</dbReference>
<dbReference type="PANTHER" id="PTHR11785">
    <property type="entry name" value="AMINO ACID TRANSPORTER"/>
    <property type="match status" value="1"/>
</dbReference>
<dbReference type="PANTHER" id="PTHR11785:SF354">
    <property type="entry name" value="B(0,+)-TYPE AMINO ACID TRANSPORTER 1"/>
    <property type="match status" value="1"/>
</dbReference>
<dbReference type="Pfam" id="PF13520">
    <property type="entry name" value="AA_permease_2"/>
    <property type="match status" value="1"/>
</dbReference>
<dbReference type="PIRSF" id="PIRSF006060">
    <property type="entry name" value="AA_transporter"/>
    <property type="match status" value="1"/>
</dbReference>
<feature type="chain" id="PRO_0000054259" description="b(0,+)-type amino acid transporter 1">
    <location>
        <begin position="1"/>
        <end position="487"/>
    </location>
</feature>
<feature type="topological domain" description="Cytoplasmic" evidence="6">
    <location>
        <begin position="1"/>
        <end position="31"/>
    </location>
</feature>
<feature type="transmembrane region" description="Helical" evidence="1">
    <location>
        <begin position="32"/>
        <end position="55"/>
    </location>
</feature>
<feature type="topological domain" description="Extracellular" evidence="6">
    <location>
        <begin position="56"/>
        <end position="62"/>
    </location>
</feature>
<feature type="transmembrane region" description="Helical" evidence="1">
    <location>
        <begin position="63"/>
        <end position="84"/>
    </location>
</feature>
<feature type="topological domain" description="Cytoplasmic" evidence="6">
    <location>
        <begin position="85"/>
        <end position="110"/>
    </location>
</feature>
<feature type="transmembrane region" description="Helical" evidence="1">
    <location>
        <begin position="111"/>
        <end position="137"/>
    </location>
</feature>
<feature type="topological domain" description="Extracellular" evidence="6">
    <location>
        <begin position="138"/>
        <end position="147"/>
    </location>
</feature>
<feature type="transmembrane region" description="Helical" evidence="1">
    <location>
        <begin position="148"/>
        <end position="169"/>
    </location>
</feature>
<feature type="transmembrane region" description="Helical" evidence="1">
    <location>
        <begin position="170"/>
        <end position="193"/>
    </location>
</feature>
<feature type="topological domain" description="Extracellular" evidence="6">
    <location>
        <begin position="194"/>
        <end position="217"/>
    </location>
</feature>
<feature type="transmembrane region" description="Helical" evidence="1">
    <location>
        <begin position="218"/>
        <end position="238"/>
    </location>
</feature>
<feature type="topological domain" description="Cytoplasmic" evidence="6">
    <location>
        <begin position="239"/>
        <end position="251"/>
    </location>
</feature>
<feature type="transmembrane region" description="Helical" evidence="1">
    <location>
        <begin position="252"/>
        <end position="274"/>
    </location>
</feature>
<feature type="topological domain" description="Extracellular" evidence="6">
    <location>
        <begin position="275"/>
        <end position="302"/>
    </location>
</feature>
<feature type="transmembrane region" description="Helical" evidence="1">
    <location>
        <begin position="303"/>
        <end position="325"/>
    </location>
</feature>
<feature type="topological domain" description="Cytoplasmic" evidence="6">
    <location>
        <begin position="326"/>
        <end position="351"/>
    </location>
</feature>
<feature type="transmembrane region" description="Helical" evidence="1">
    <location>
        <begin position="352"/>
        <end position="370"/>
    </location>
</feature>
<feature type="transmembrane region" description="Helical" evidence="1">
    <location>
        <begin position="371"/>
        <end position="391"/>
    </location>
</feature>
<feature type="topological domain" description="Cytoplasmic" evidence="6">
    <location>
        <begin position="392"/>
        <end position="410"/>
    </location>
</feature>
<feature type="transmembrane region" description="Helical" evidence="1">
    <location>
        <begin position="411"/>
        <end position="431"/>
    </location>
</feature>
<feature type="topological domain" description="Extracellular" evidence="6">
    <location>
        <begin position="432"/>
        <end position="434"/>
    </location>
</feature>
<feature type="transmembrane region" description="Helical" evidence="1">
    <location>
        <begin position="435"/>
        <end position="450"/>
    </location>
</feature>
<feature type="topological domain" description="Cytoplasmic" evidence="6">
    <location>
        <begin position="451"/>
        <end position="487"/>
    </location>
</feature>
<feature type="region of interest" description="Disordered" evidence="3">
    <location>
        <begin position="1"/>
        <end position="20"/>
    </location>
</feature>
<feature type="binding site" evidence="1">
    <location>
        <begin position="43"/>
        <end position="47"/>
    </location>
    <ligand>
        <name>L-arginine</name>
        <dbReference type="ChEBI" id="CHEBI:32682"/>
        <note>substrate</note>
    </ligand>
</feature>
<feature type="binding site" evidence="1">
    <location>
        <position position="233"/>
    </location>
    <ligand>
        <name>L-arginine</name>
        <dbReference type="ChEBI" id="CHEBI:32682"/>
        <note>substrate</note>
    </ligand>
</feature>
<feature type="modified residue" description="Phosphoserine" evidence="2">
    <location>
        <position position="18"/>
    </location>
</feature>
<feature type="disulfide bond" description="Interchain (with C-113 in SLC3A1)" evidence="1">
    <location>
        <position position="144"/>
    </location>
</feature>
<comment type="function">
    <text evidence="1 4">Associates with SLC3A1 to form a functional transporter complex that mediates the electrogenic exchange between cationic amino acids and neutral amino acids, with a stoichiometry of 1:1 (By similarity) (PubMed:10588648). Has system b(0,+)-like activity with high affinity for extracellular cationic amino acids and L-cystine and lower affinity for intracellular neutral amino acids (By similarity). Substrate exchange is driven by high concentration of intracellular neutral amino acids and the intracellular reduction of L-cystine to L-cysteine (By similarity). Required for reabsorption of L-cystine and dibasic amino acids across the brush border membrane in renal proximal tubules (By similarity).</text>
</comment>
<comment type="catalytic activity">
    <reaction evidence="1">
        <text>L-leucine(out) + L-arginine(in) = L-leucine(in) + L-arginine(out)</text>
        <dbReference type="Rhea" id="RHEA:71059"/>
        <dbReference type="ChEBI" id="CHEBI:32682"/>
        <dbReference type="ChEBI" id="CHEBI:57427"/>
    </reaction>
    <physiologicalReaction direction="left-to-right" evidence="1">
        <dbReference type="Rhea" id="RHEA:71060"/>
    </physiologicalReaction>
</comment>
<comment type="catalytic activity">
    <reaction evidence="1">
        <text>L-histidine(out) + L-arginine(in) = L-histidine(in) + L-arginine(out)</text>
        <dbReference type="Rhea" id="RHEA:71063"/>
        <dbReference type="ChEBI" id="CHEBI:32682"/>
        <dbReference type="ChEBI" id="CHEBI:57595"/>
    </reaction>
    <physiologicalReaction direction="left-to-right" evidence="1">
        <dbReference type="Rhea" id="RHEA:71064"/>
    </physiologicalReaction>
</comment>
<comment type="catalytic activity">
    <reaction evidence="1">
        <text>L-arginine(in) + L-phenylalanine(out) = L-arginine(out) + L-phenylalanine(in)</text>
        <dbReference type="Rhea" id="RHEA:71067"/>
        <dbReference type="ChEBI" id="CHEBI:32682"/>
        <dbReference type="ChEBI" id="CHEBI:58095"/>
    </reaction>
    <physiologicalReaction direction="left-to-right" evidence="1">
        <dbReference type="Rhea" id="RHEA:71068"/>
    </physiologicalReaction>
</comment>
<comment type="catalytic activity">
    <reaction evidence="1">
        <text>L-cysteine(out) + L-arginine(in) = L-cysteine(in) + L-arginine(out)</text>
        <dbReference type="Rhea" id="RHEA:71071"/>
        <dbReference type="ChEBI" id="CHEBI:32682"/>
        <dbReference type="ChEBI" id="CHEBI:35235"/>
    </reaction>
    <physiologicalReaction direction="left-to-right" evidence="1">
        <dbReference type="Rhea" id="RHEA:71072"/>
    </physiologicalReaction>
</comment>
<comment type="catalytic activity">
    <reaction evidence="1">
        <text>L-cystine(out) + L-arginine(in) = L-cystine(in) + L-arginine(out)</text>
        <dbReference type="Rhea" id="RHEA:71075"/>
        <dbReference type="ChEBI" id="CHEBI:32682"/>
        <dbReference type="ChEBI" id="CHEBI:35491"/>
    </reaction>
    <physiologicalReaction direction="left-to-right" evidence="1">
        <dbReference type="Rhea" id="RHEA:71076"/>
    </physiologicalReaction>
</comment>
<comment type="catalytic activity">
    <reaction evidence="1">
        <text>L-lysine(out) + L-arginine(in) = L-lysine(in) + L-arginine(out)</text>
        <dbReference type="Rhea" id="RHEA:70827"/>
        <dbReference type="ChEBI" id="CHEBI:32551"/>
        <dbReference type="ChEBI" id="CHEBI:32682"/>
    </reaction>
    <physiologicalReaction direction="left-to-right" evidence="1">
        <dbReference type="Rhea" id="RHEA:70828"/>
    </physiologicalReaction>
</comment>
<comment type="subunit">
    <text evidence="1 2 4">Disulfide-linked heterodimer composed of the catalytic light chain subunit SLC7A9 and the heavy chain subunit SLC3A1. The heterodimer is the minimal functional unit. Assembles in heterotetramers (dimers of heterodimers) and higher order oligomers; the oligomerization is mediated by SLC3A1 likely to prevent degradation and facilitate heteromer trafficking to the plasma membrane (By similarity) (PubMed:10588648). Interacts with CAV1 (By similarity).</text>
</comment>
<comment type="subcellular location">
    <subcellularLocation>
        <location evidence="7">Apical cell membrane</location>
        <topology evidence="7">Multi-pass membrane protein</topology>
    </subcellularLocation>
</comment>
<comment type="tissue specificity">
    <text evidence="5">Expressed in the brush border membrane in the kidney (at protein level).</text>
</comment>
<comment type="similarity">
    <text evidence="6">Belongs to the amino acid-polyamine-organocation (APC) superfamily.</text>
</comment>
<keyword id="KW-0029">Amino-acid transport</keyword>
<keyword id="KW-1003">Cell membrane</keyword>
<keyword id="KW-1015">Disulfide bond</keyword>
<keyword id="KW-0472">Membrane</keyword>
<keyword id="KW-0597">Phosphoprotein</keyword>
<keyword id="KW-1185">Reference proteome</keyword>
<keyword id="KW-0812">Transmembrane</keyword>
<keyword id="KW-1133">Transmembrane helix</keyword>
<keyword id="KW-0813">Transport</keyword>
<evidence type="ECO:0000250" key="1">
    <source>
        <dbReference type="UniProtKB" id="P82251"/>
    </source>
</evidence>
<evidence type="ECO:0000250" key="2">
    <source>
        <dbReference type="UniProtKB" id="P82252"/>
    </source>
</evidence>
<evidence type="ECO:0000256" key="3">
    <source>
        <dbReference type="SAM" id="MobiDB-lite"/>
    </source>
</evidence>
<evidence type="ECO:0000269" key="4">
    <source>
    </source>
</evidence>
<evidence type="ECO:0000269" key="5">
    <source>
    </source>
</evidence>
<evidence type="ECO:0000305" key="6"/>
<evidence type="ECO:0000305" key="7">
    <source>
    </source>
</evidence>